<protein>
    <recommendedName>
        <fullName>Beta-glucosyl-HMC-alpha-glucosyl-transferase</fullName>
        <ecNumber>2.4.1.-</ecNumber>
    </recommendedName>
</protein>
<organism>
    <name type="scientific">Enterobacteria phage T6</name>
    <name type="common">Bacteriophage T6</name>
    <dbReference type="NCBI Taxonomy" id="10666"/>
    <lineage>
        <taxon>Viruses</taxon>
        <taxon>Duplodnaviria</taxon>
        <taxon>Heunggongvirae</taxon>
        <taxon>Uroviricota</taxon>
        <taxon>Caudoviricetes</taxon>
        <taxon>Straboviridae</taxon>
        <taxon>Tevenvirinae</taxon>
        <taxon>Tequatrovirus</taxon>
        <taxon>Tequatrovirus T6</taxon>
    </lineage>
</organism>
<organismHost>
    <name type="scientific">Escherichia coli</name>
    <dbReference type="NCBI Taxonomy" id="562"/>
</organismHost>
<dbReference type="EC" id="2.4.1.-"/>
<dbReference type="EMBL" id="X68725">
    <property type="protein sequence ID" value="CAA48667.1"/>
    <property type="molecule type" value="Genomic_DNA"/>
</dbReference>
<dbReference type="PIR" id="S35626">
    <property type="entry name" value="S35626"/>
</dbReference>
<dbReference type="SMR" id="Q06718"/>
<dbReference type="UniPathway" id="UPA00198"/>
<dbReference type="GO" id="GO:0016757">
    <property type="term" value="F:glycosyltransferase activity"/>
    <property type="evidence" value="ECO:0007669"/>
    <property type="project" value="UniProtKB-KW"/>
</dbReference>
<dbReference type="GO" id="GO:0006304">
    <property type="term" value="P:DNA modification"/>
    <property type="evidence" value="ECO:0007669"/>
    <property type="project" value="UniProtKB-UniPathway"/>
</dbReference>
<dbReference type="InterPro" id="IPR049100">
    <property type="entry name" value="TAGT"/>
</dbReference>
<dbReference type="Pfam" id="PF20691">
    <property type="entry name" value="TAGT"/>
    <property type="match status" value="1"/>
</dbReference>
<sequence length="280" mass="32300">MIQFVIPSYQRVGAVSALDMFPTDYEPHIVVREHEEKAYNDAYGSRAKIITIPDGVNGIAGTRKAITDMYAGQRIWMIDDDTTIRMSSMRKRDDRRCVDKVNQLTHEQFYELIQYVEDAMDCGYYHGHARLPIFKITSSWGNYRENSYGFTNTWYDLGKLTTEQIGYGKIDLCEDMYAFLNLINQGYPHLALFKYLVVSGKAQAPGGCSSIRSNSKHNRALEQINREFPEQARWKTSNIEKRKSLGEEDEPLKVLRMCVSRKEKSEAFHKFNAIHPIAVD</sequence>
<keyword id="KW-0328">Glycosyltransferase</keyword>
<keyword id="KW-0808">Transferase</keyword>
<comment type="function">
    <text>Transfers a gentiobiosyl-group on a hydroxymethylcytosine residue in DNA. Is involved in a DNA modification process to protects the phage genome against its own nucleases and the host restriction endonuclease system.</text>
</comment>
<comment type="pathway">
    <text>Genetic information processing; DNA modification.</text>
</comment>
<accession>Q06718</accession>
<proteinExistence type="predicted"/>
<name>GSTG_BPT6</name>
<reference key="1">
    <citation type="journal article" date="1993" name="Nucleic Acids Res.">
        <title>Cloning and sequencing of the genes of beta-glucosyl-HMC-alpha-glucosyl-transferases of bacteriophages T2 and T6.</title>
        <authorList>
            <person name="Winkler M."/>
            <person name="Rueger W."/>
        </authorList>
    </citation>
    <scope>NUCLEOTIDE SEQUENCE [GENOMIC DNA]</scope>
</reference>
<feature type="chain" id="PRO_0000164944" description="Beta-glucosyl-HMC-alpha-glucosyl-transferase">
    <location>
        <begin position="1"/>
        <end position="280"/>
    </location>
</feature>